<gene>
    <name evidence="2" type="primary">cml</name>
</gene>
<protein>
    <recommendedName>
        <fullName>Probable N-acetyltransferase camello</fullName>
        <ecNumber>2.3.1.-</ecNumber>
    </recommendedName>
</protein>
<comment type="function">
    <text evidence="2">Plays a role in regulation of gastrulation, possibly by controlled reduction of cell adhesion in the periblastopore region which is necessary for optimal cell motility.</text>
</comment>
<comment type="subcellular location">
    <subcellularLocation>
        <location evidence="1">Golgi apparatus membrane</location>
        <topology evidence="1">Multi-pass membrane protein</topology>
    </subcellularLocation>
</comment>
<comment type="similarity">
    <text evidence="2">Belongs to the camello family.</text>
</comment>
<reference evidence="5" key="1">
    <citation type="submission" date="2004-08" db="EMBL/GenBank/DDBJ databases">
        <authorList>
            <consortium name="NIH - Xenopus Gene Collection (XGC) project"/>
        </authorList>
    </citation>
    <scope>NUCLEOTIDE SEQUENCE [LARGE SCALE MRNA]</scope>
    <source>
        <tissue evidence="5">Embryo</tissue>
    </source>
</reference>
<proteinExistence type="evidence at transcript level"/>
<keyword id="KW-0012">Acyltransferase</keyword>
<keyword id="KW-0217">Developmental protein</keyword>
<keyword id="KW-0306">Gastrulation</keyword>
<keyword id="KW-0333">Golgi apparatus</keyword>
<keyword id="KW-0472">Membrane</keyword>
<keyword id="KW-1185">Reference proteome</keyword>
<keyword id="KW-0808">Transferase</keyword>
<keyword id="KW-0812">Transmembrane</keyword>
<keyword id="KW-1133">Transmembrane helix</keyword>
<evidence type="ECO:0000250" key="1"/>
<evidence type="ECO:0000250" key="2">
    <source>
        <dbReference type="UniProtKB" id="Q9I8W5"/>
    </source>
</evidence>
<evidence type="ECO:0000255" key="3"/>
<evidence type="ECO:0000255" key="4">
    <source>
        <dbReference type="PROSITE-ProRule" id="PRU00532"/>
    </source>
</evidence>
<evidence type="ECO:0000312" key="5">
    <source>
        <dbReference type="EMBL" id="AAH80345.1"/>
    </source>
</evidence>
<organism>
    <name type="scientific">Xenopus tropicalis</name>
    <name type="common">Western clawed frog</name>
    <name type="synonym">Silurana tropicalis</name>
    <dbReference type="NCBI Taxonomy" id="8364"/>
    <lineage>
        <taxon>Eukaryota</taxon>
        <taxon>Metazoa</taxon>
        <taxon>Chordata</taxon>
        <taxon>Craniata</taxon>
        <taxon>Vertebrata</taxon>
        <taxon>Euteleostomi</taxon>
        <taxon>Amphibia</taxon>
        <taxon>Batrachia</taxon>
        <taxon>Anura</taxon>
        <taxon>Pipoidea</taxon>
        <taxon>Pipidae</taxon>
        <taxon>Xenopodinae</taxon>
        <taxon>Xenopus</taxon>
        <taxon>Silurana</taxon>
    </lineage>
</organism>
<dbReference type="EC" id="2.3.1.-"/>
<dbReference type="EMBL" id="BC080345">
    <property type="protein sequence ID" value="AAH80345.1"/>
    <property type="molecule type" value="mRNA"/>
</dbReference>
<dbReference type="SMR" id="Q66KL0"/>
<dbReference type="STRING" id="8364.ENSXETP00000024846"/>
<dbReference type="PaxDb" id="8364-ENSXETP00000056165"/>
<dbReference type="DNASU" id="493291"/>
<dbReference type="KEGG" id="xtr:493291"/>
<dbReference type="CTD" id="493291"/>
<dbReference type="eggNOG" id="KOG3139">
    <property type="taxonomic scope" value="Eukaryota"/>
</dbReference>
<dbReference type="HOGENOM" id="CLU_013985_10_1_1"/>
<dbReference type="InParanoid" id="Q66KL0"/>
<dbReference type="OMA" id="HIGPCFQ"/>
<dbReference type="OrthoDB" id="41532at2759"/>
<dbReference type="PhylomeDB" id="Q66KL0"/>
<dbReference type="TreeFam" id="TF324687"/>
<dbReference type="Proteomes" id="UP000008143">
    <property type="component" value="Chromosome 1"/>
</dbReference>
<dbReference type="Bgee" id="ENSXETG00000026706">
    <property type="expression patterns" value="Expressed in neurula embryo and 5 other cell types or tissues"/>
</dbReference>
<dbReference type="GO" id="GO:0005794">
    <property type="term" value="C:Golgi apparatus"/>
    <property type="evidence" value="ECO:0000250"/>
    <property type="project" value="UniProtKB"/>
</dbReference>
<dbReference type="GO" id="GO:0000139">
    <property type="term" value="C:Golgi membrane"/>
    <property type="evidence" value="ECO:0007669"/>
    <property type="project" value="UniProtKB-SubCell"/>
</dbReference>
<dbReference type="GO" id="GO:0008080">
    <property type="term" value="F:N-acetyltransferase activity"/>
    <property type="evidence" value="ECO:0007669"/>
    <property type="project" value="InterPro"/>
</dbReference>
<dbReference type="GO" id="GO:0001702">
    <property type="term" value="P:gastrulation with mouth forming second"/>
    <property type="evidence" value="ECO:0000250"/>
    <property type="project" value="UniProtKB"/>
</dbReference>
<dbReference type="GO" id="GO:0007162">
    <property type="term" value="P:negative regulation of cell adhesion"/>
    <property type="evidence" value="ECO:0000250"/>
    <property type="project" value="UniProtKB"/>
</dbReference>
<dbReference type="CDD" id="cd04301">
    <property type="entry name" value="NAT_SF"/>
    <property type="match status" value="1"/>
</dbReference>
<dbReference type="Gene3D" id="3.40.630.30">
    <property type="match status" value="1"/>
</dbReference>
<dbReference type="InterPro" id="IPR016181">
    <property type="entry name" value="Acyl_CoA_acyltransferase"/>
</dbReference>
<dbReference type="InterPro" id="IPR000182">
    <property type="entry name" value="GNAT_dom"/>
</dbReference>
<dbReference type="InterPro" id="IPR050769">
    <property type="entry name" value="NAT_camello-type"/>
</dbReference>
<dbReference type="PANTHER" id="PTHR13947">
    <property type="entry name" value="GNAT FAMILY N-ACETYLTRANSFERASE"/>
    <property type="match status" value="1"/>
</dbReference>
<dbReference type="PANTHER" id="PTHR13947:SF55">
    <property type="entry name" value="N-ACETYLTRANSFERASE CAMELLO-RELATED"/>
    <property type="match status" value="1"/>
</dbReference>
<dbReference type="Pfam" id="PF00583">
    <property type="entry name" value="Acetyltransf_1"/>
    <property type="match status" value="1"/>
</dbReference>
<dbReference type="SUPFAM" id="SSF55729">
    <property type="entry name" value="Acyl-CoA N-acyltransferases (Nat)"/>
    <property type="match status" value="1"/>
</dbReference>
<dbReference type="PROSITE" id="PS51186">
    <property type="entry name" value="GNAT"/>
    <property type="match status" value="1"/>
</dbReference>
<accession>Q66KL0</accession>
<sequence length="219" mass="24866">MANVSIRKYKTSDYETARFLFAEGTKEHLPAACMYTLTTPRFYFITFVAFTSVFMGTGSYVLALTSLVALLAAGWYGLYSEFHGLASRFLRKDMLDIEKSYMMSENACFWVAEIDGKVVGTVGAQPSTDADDELLLQRISVARDYRQLRIGTKLCQTVIDFARQRGFNAVCLETANIQRAATNLYERVGFKKSRVEILPSLVHQYTSFTVAYYRYNIKS</sequence>
<feature type="chain" id="PRO_0000284699" description="Probable N-acetyltransferase camello">
    <location>
        <begin position="1"/>
        <end position="219"/>
    </location>
</feature>
<feature type="transmembrane region" description="Helical" evidence="3">
    <location>
        <begin position="44"/>
        <end position="64"/>
    </location>
</feature>
<feature type="transmembrane region" description="Helical" evidence="3">
    <location>
        <begin position="66"/>
        <end position="86"/>
    </location>
</feature>
<feature type="domain" description="N-acetyltransferase" evidence="4">
    <location>
        <begin position="62"/>
        <end position="211"/>
    </location>
</feature>
<name>CMLO_XENTR</name>